<reference key="1">
    <citation type="journal article" date="2003" name="DNA Res.">
        <title>Prediction of the coding sequences of mouse homologues of KIAA gene: II. The complete nucleotide sequences of 400 mouse KIAA-homologous cDNAs identified by screening of terminal sequences of cDNA clones randomly sampled from size-fractionated libraries.</title>
        <authorList>
            <person name="Okazaki N."/>
            <person name="Kikuno R."/>
            <person name="Ohara R."/>
            <person name="Inamoto S."/>
            <person name="Aizawa H."/>
            <person name="Yuasa S."/>
            <person name="Nakajima D."/>
            <person name="Nagase T."/>
            <person name="Ohara O."/>
            <person name="Koga H."/>
        </authorList>
    </citation>
    <scope>NUCLEOTIDE SEQUENCE [LARGE SCALE MRNA] (ISOFORM 2)</scope>
    <source>
        <tissue>Brain</tissue>
    </source>
</reference>
<reference key="2">
    <citation type="journal article" date="2005" name="Science">
        <title>The transcriptional landscape of the mammalian genome.</title>
        <authorList>
            <person name="Carninci P."/>
            <person name="Kasukawa T."/>
            <person name="Katayama S."/>
            <person name="Gough J."/>
            <person name="Frith M.C."/>
            <person name="Maeda N."/>
            <person name="Oyama R."/>
            <person name="Ravasi T."/>
            <person name="Lenhard B."/>
            <person name="Wells C."/>
            <person name="Kodzius R."/>
            <person name="Shimokawa K."/>
            <person name="Bajic V.B."/>
            <person name="Brenner S.E."/>
            <person name="Batalov S."/>
            <person name="Forrest A.R."/>
            <person name="Zavolan M."/>
            <person name="Davis M.J."/>
            <person name="Wilming L.G."/>
            <person name="Aidinis V."/>
            <person name="Allen J.E."/>
            <person name="Ambesi-Impiombato A."/>
            <person name="Apweiler R."/>
            <person name="Aturaliya R.N."/>
            <person name="Bailey T.L."/>
            <person name="Bansal M."/>
            <person name="Baxter L."/>
            <person name="Beisel K.W."/>
            <person name="Bersano T."/>
            <person name="Bono H."/>
            <person name="Chalk A.M."/>
            <person name="Chiu K.P."/>
            <person name="Choudhary V."/>
            <person name="Christoffels A."/>
            <person name="Clutterbuck D.R."/>
            <person name="Crowe M.L."/>
            <person name="Dalla E."/>
            <person name="Dalrymple B.P."/>
            <person name="de Bono B."/>
            <person name="Della Gatta G."/>
            <person name="di Bernardo D."/>
            <person name="Down T."/>
            <person name="Engstrom P."/>
            <person name="Fagiolini M."/>
            <person name="Faulkner G."/>
            <person name="Fletcher C.F."/>
            <person name="Fukushima T."/>
            <person name="Furuno M."/>
            <person name="Futaki S."/>
            <person name="Gariboldi M."/>
            <person name="Georgii-Hemming P."/>
            <person name="Gingeras T.R."/>
            <person name="Gojobori T."/>
            <person name="Green R.E."/>
            <person name="Gustincich S."/>
            <person name="Harbers M."/>
            <person name="Hayashi Y."/>
            <person name="Hensch T.K."/>
            <person name="Hirokawa N."/>
            <person name="Hill D."/>
            <person name="Huminiecki L."/>
            <person name="Iacono M."/>
            <person name="Ikeo K."/>
            <person name="Iwama A."/>
            <person name="Ishikawa T."/>
            <person name="Jakt M."/>
            <person name="Kanapin A."/>
            <person name="Katoh M."/>
            <person name="Kawasawa Y."/>
            <person name="Kelso J."/>
            <person name="Kitamura H."/>
            <person name="Kitano H."/>
            <person name="Kollias G."/>
            <person name="Krishnan S.P."/>
            <person name="Kruger A."/>
            <person name="Kummerfeld S.K."/>
            <person name="Kurochkin I.V."/>
            <person name="Lareau L.F."/>
            <person name="Lazarevic D."/>
            <person name="Lipovich L."/>
            <person name="Liu J."/>
            <person name="Liuni S."/>
            <person name="McWilliam S."/>
            <person name="Madan Babu M."/>
            <person name="Madera M."/>
            <person name="Marchionni L."/>
            <person name="Matsuda H."/>
            <person name="Matsuzawa S."/>
            <person name="Miki H."/>
            <person name="Mignone F."/>
            <person name="Miyake S."/>
            <person name="Morris K."/>
            <person name="Mottagui-Tabar S."/>
            <person name="Mulder N."/>
            <person name="Nakano N."/>
            <person name="Nakauchi H."/>
            <person name="Ng P."/>
            <person name="Nilsson R."/>
            <person name="Nishiguchi S."/>
            <person name="Nishikawa S."/>
            <person name="Nori F."/>
            <person name="Ohara O."/>
            <person name="Okazaki Y."/>
            <person name="Orlando V."/>
            <person name="Pang K.C."/>
            <person name="Pavan W.J."/>
            <person name="Pavesi G."/>
            <person name="Pesole G."/>
            <person name="Petrovsky N."/>
            <person name="Piazza S."/>
            <person name="Reed J."/>
            <person name="Reid J.F."/>
            <person name="Ring B.Z."/>
            <person name="Ringwald M."/>
            <person name="Rost B."/>
            <person name="Ruan Y."/>
            <person name="Salzberg S.L."/>
            <person name="Sandelin A."/>
            <person name="Schneider C."/>
            <person name="Schoenbach C."/>
            <person name="Sekiguchi K."/>
            <person name="Semple C.A."/>
            <person name="Seno S."/>
            <person name="Sessa L."/>
            <person name="Sheng Y."/>
            <person name="Shibata Y."/>
            <person name="Shimada H."/>
            <person name="Shimada K."/>
            <person name="Silva D."/>
            <person name="Sinclair B."/>
            <person name="Sperling S."/>
            <person name="Stupka E."/>
            <person name="Sugiura K."/>
            <person name="Sultana R."/>
            <person name="Takenaka Y."/>
            <person name="Taki K."/>
            <person name="Tammoja K."/>
            <person name="Tan S.L."/>
            <person name="Tang S."/>
            <person name="Taylor M.S."/>
            <person name="Tegner J."/>
            <person name="Teichmann S.A."/>
            <person name="Ueda H.R."/>
            <person name="van Nimwegen E."/>
            <person name="Verardo R."/>
            <person name="Wei C.L."/>
            <person name="Yagi K."/>
            <person name="Yamanishi H."/>
            <person name="Zabarovsky E."/>
            <person name="Zhu S."/>
            <person name="Zimmer A."/>
            <person name="Hide W."/>
            <person name="Bult C."/>
            <person name="Grimmond S.M."/>
            <person name="Teasdale R.D."/>
            <person name="Liu E.T."/>
            <person name="Brusic V."/>
            <person name="Quackenbush J."/>
            <person name="Wahlestedt C."/>
            <person name="Mattick J.S."/>
            <person name="Hume D.A."/>
            <person name="Kai C."/>
            <person name="Sasaki D."/>
            <person name="Tomaru Y."/>
            <person name="Fukuda S."/>
            <person name="Kanamori-Katayama M."/>
            <person name="Suzuki M."/>
            <person name="Aoki J."/>
            <person name="Arakawa T."/>
            <person name="Iida J."/>
            <person name="Imamura K."/>
            <person name="Itoh M."/>
            <person name="Kato T."/>
            <person name="Kawaji H."/>
            <person name="Kawagashira N."/>
            <person name="Kawashima T."/>
            <person name="Kojima M."/>
            <person name="Kondo S."/>
            <person name="Konno H."/>
            <person name="Nakano K."/>
            <person name="Ninomiya N."/>
            <person name="Nishio T."/>
            <person name="Okada M."/>
            <person name="Plessy C."/>
            <person name="Shibata K."/>
            <person name="Shiraki T."/>
            <person name="Suzuki S."/>
            <person name="Tagami M."/>
            <person name="Waki K."/>
            <person name="Watahiki A."/>
            <person name="Okamura-Oho Y."/>
            <person name="Suzuki H."/>
            <person name="Kawai J."/>
            <person name="Hayashizaki Y."/>
        </authorList>
    </citation>
    <scope>NUCLEOTIDE SEQUENCE [LARGE SCALE MRNA] (ISOFORM 1)</scope>
    <source>
        <strain>C57BL/6J</strain>
        <tissue>Head</tissue>
        <tissue>Thymus</tissue>
    </source>
</reference>
<reference key="3">
    <citation type="journal article" date="2004" name="Genome Res.">
        <title>The status, quality, and expansion of the NIH full-length cDNA project: the Mammalian Gene Collection (MGC).</title>
        <authorList>
            <consortium name="The MGC Project Team"/>
        </authorList>
    </citation>
    <scope>NUCLEOTIDE SEQUENCE [LARGE SCALE MRNA] (ISOFORM 1)</scope>
    <source>
        <strain>C57BL/6J</strain>
        <strain>FVB/N-3</strain>
        <tissue>Brain</tissue>
        <tissue>Mammary tumor</tissue>
    </source>
</reference>
<reference key="4">
    <citation type="journal article" date="2007" name="Mol. Cell. Proteomics">
        <title>Qualitative and quantitative analyses of protein phosphorylation in naive and stimulated mouse synaptosomal preparations.</title>
        <authorList>
            <person name="Munton R.P."/>
            <person name="Tweedie-Cullen R."/>
            <person name="Livingstone-Zatchej M."/>
            <person name="Weinandy F."/>
            <person name="Waidelich M."/>
            <person name="Longo D."/>
            <person name="Gehrig P."/>
            <person name="Potthast F."/>
            <person name="Rutishauser D."/>
            <person name="Gerrits B."/>
            <person name="Panse C."/>
            <person name="Schlapbach R."/>
            <person name="Mansuy I.M."/>
        </authorList>
    </citation>
    <scope>IDENTIFICATION BY MASS SPECTROMETRY [LARGE SCALE ANALYSIS]</scope>
    <source>
        <tissue>Brain cortex</tissue>
    </source>
</reference>
<reference key="5">
    <citation type="journal article" date="2007" name="Proc. Natl. Acad. Sci. U.S.A.">
        <title>Large-scale phosphorylation analysis of mouse liver.</title>
        <authorList>
            <person name="Villen J."/>
            <person name="Beausoleil S.A."/>
            <person name="Gerber S.A."/>
            <person name="Gygi S.P."/>
        </authorList>
    </citation>
    <scope>PHOSPHORYLATION [LARGE SCALE ANALYSIS] AT SER-747</scope>
    <scope>IDENTIFICATION BY MASS SPECTROMETRY [LARGE SCALE ANALYSIS]</scope>
    <source>
        <tissue>Liver</tissue>
    </source>
</reference>
<reference key="6">
    <citation type="journal article" date="2009" name="Immunity">
        <title>The phagosomal proteome in interferon-gamma-activated macrophages.</title>
        <authorList>
            <person name="Trost M."/>
            <person name="English L."/>
            <person name="Lemieux S."/>
            <person name="Courcelles M."/>
            <person name="Desjardins M."/>
            <person name="Thibault P."/>
        </authorList>
    </citation>
    <scope>PHOSPHORYLATION [LARGE SCALE ANALYSIS] AT SER-157; SER-159; SER-284; SER-388; SER-533; SER-613; SER-614; SER-723; SER-747; SER-1169; SER-1172; SER-1173 AND SER-1333</scope>
    <scope>IDENTIFICATION BY MASS SPECTROMETRY [LARGE SCALE ANALYSIS]</scope>
</reference>
<reference key="7">
    <citation type="journal article" date="2009" name="Mol. Cell. Proteomics">
        <title>Large scale localization of protein phosphorylation by use of electron capture dissociation mass spectrometry.</title>
        <authorList>
            <person name="Sweet S.M."/>
            <person name="Bailey C.M."/>
            <person name="Cunningham D.L."/>
            <person name="Heath J.K."/>
            <person name="Cooper H.J."/>
        </authorList>
    </citation>
    <scope>PHOSPHORYLATION [LARGE SCALE ANALYSIS] AT SER-614 AND SER-747</scope>
    <scope>IDENTIFICATION BY MASS SPECTROMETRY [LARGE SCALE ANALYSIS]</scope>
    <source>
        <tissue>Embryonic fibroblast</tissue>
    </source>
</reference>
<reference key="8">
    <citation type="journal article" date="2010" name="Cell">
        <title>A tissue-specific atlas of mouse protein phosphorylation and expression.</title>
        <authorList>
            <person name="Huttlin E.L."/>
            <person name="Jedrychowski M.P."/>
            <person name="Elias J.E."/>
            <person name="Goswami T."/>
            <person name="Rad R."/>
            <person name="Beausoleil S.A."/>
            <person name="Villen J."/>
            <person name="Haas W."/>
            <person name="Sowa M.E."/>
            <person name="Gygi S.P."/>
        </authorList>
    </citation>
    <scope>PHOSPHORYLATION [LARGE SCALE ANALYSIS] AT SER-157; THR-322; SER-533; SER-613; SER-614; SER-723; SER-747; SER-752; SER-798; SER-870; SER-873; SER-1169 AND SER-1172</scope>
    <scope>IDENTIFICATION BY MASS SPECTROMETRY [LARGE SCALE ANALYSIS]</scope>
    <source>
        <tissue>Brain</tissue>
        <tissue>Brown adipose tissue</tissue>
        <tissue>Heart</tissue>
        <tissue>Kidney</tissue>
        <tissue>Liver</tissue>
        <tissue>Lung</tissue>
        <tissue>Pancreas</tissue>
        <tissue>Spleen</tissue>
        <tissue>Testis</tissue>
    </source>
</reference>
<reference key="9">
    <citation type="journal article" date="2017" name="Nat. Cell Biol.">
        <title>TBC1D23 is a bridging factor for endosomal vesicle capture by golgins at the trans-Golgi.</title>
        <authorList>
            <person name="Shin J.J.H."/>
            <person name="Gillingham A.K."/>
            <person name="Begum F."/>
            <person name="Chadwick J."/>
            <person name="Munro S."/>
        </authorList>
    </citation>
    <scope>INTERACTION WITH TBC1D23</scope>
</reference>
<proteinExistence type="evidence at protein level"/>
<keyword id="KW-0025">Alternative splicing</keyword>
<keyword id="KW-1003">Cell membrane</keyword>
<keyword id="KW-0967">Endosome</keyword>
<keyword id="KW-0472">Membrane</keyword>
<keyword id="KW-0597">Phosphoprotein</keyword>
<keyword id="KW-0653">Protein transport</keyword>
<keyword id="KW-1185">Reference proteome</keyword>
<keyword id="KW-0813">Transport</keyword>
<feature type="chain" id="PRO_0000317433" description="WASH complex subunit 2">
    <location>
        <begin position="1"/>
        <end position="1334"/>
    </location>
</feature>
<feature type="region of interest" description="Sufficient for interaction with WASHC3, WASHC4 and WASHC5; required for interaction with WASHC1" evidence="3">
    <location>
        <begin position="1"/>
        <end position="219"/>
    </location>
</feature>
<feature type="region of interest" description="Disordered" evidence="4">
    <location>
        <begin position="201"/>
        <end position="471"/>
    </location>
</feature>
<feature type="region of interest" description="Sufficient for interaction with CCDC93" evidence="3">
    <location>
        <begin position="347"/>
        <end position="594"/>
    </location>
</feature>
<feature type="region of interest" description="Interaction with VPS35" evidence="3">
    <location>
        <begin position="348"/>
        <end position="1334"/>
    </location>
</feature>
<feature type="region of interest" description="Disordered" evidence="4">
    <location>
        <begin position="492"/>
        <end position="650"/>
    </location>
</feature>
<feature type="region of interest" description="Disordered" evidence="4">
    <location>
        <begin position="691"/>
        <end position="837"/>
    </location>
</feature>
<feature type="region of interest" description="Disordered" evidence="4">
    <location>
        <begin position="862"/>
        <end position="948"/>
    </location>
</feature>
<feature type="region of interest" description="Interaction with phospholipids" evidence="3">
    <location>
        <begin position="932"/>
        <end position="1334"/>
    </location>
</feature>
<feature type="region of interest" description="Disordered" evidence="4">
    <location>
        <begin position="1014"/>
        <end position="1225"/>
    </location>
</feature>
<feature type="region of interest" description="Required for interaction with F-actin-capping protein subunit alpha (CAPZA1 or CAPZA2 or CAPZA3)" evidence="3">
    <location>
        <begin position="1024"/>
        <end position="1042"/>
    </location>
</feature>
<feature type="region of interest" description="Disordered" evidence="4">
    <location>
        <begin position="1294"/>
        <end position="1334"/>
    </location>
</feature>
<feature type="short sequence motif" description="LFa 1" evidence="3">
    <location>
        <begin position="358"/>
        <end position="368"/>
    </location>
</feature>
<feature type="short sequence motif" description="LFa 2" evidence="3">
    <location>
        <begin position="441"/>
        <end position="457"/>
    </location>
</feature>
<feature type="short sequence motif" description="LFa 3" evidence="3">
    <location>
        <begin position="476"/>
        <end position="485"/>
    </location>
</feature>
<feature type="short sequence motif" description="LFa 4" evidence="3">
    <location>
        <begin position="531"/>
        <end position="542"/>
    </location>
</feature>
<feature type="short sequence motif" description="LFa 5" evidence="3">
    <location>
        <begin position="566"/>
        <end position="577"/>
    </location>
</feature>
<feature type="short sequence motif" description="LFa 6" evidence="3">
    <location>
        <begin position="658"/>
        <end position="670"/>
    </location>
</feature>
<feature type="short sequence motif" description="LFa 7" evidence="3">
    <location>
        <begin position="686"/>
        <end position="698"/>
    </location>
</feature>
<feature type="short sequence motif" description="LFa 8" evidence="3">
    <location>
        <begin position="835"/>
        <end position="843"/>
    </location>
</feature>
<feature type="short sequence motif" description="LFa 9" evidence="3">
    <location>
        <begin position="852"/>
        <end position="858"/>
    </location>
</feature>
<feature type="short sequence motif" description="LFa 10" evidence="3">
    <location>
        <begin position="874"/>
        <end position="884"/>
    </location>
</feature>
<feature type="short sequence motif" description="LFa 11" evidence="3">
    <location>
        <begin position="1124"/>
        <end position="1131"/>
    </location>
</feature>
<feature type="short sequence motif" description="LFa 12" evidence="3">
    <location>
        <begin position="1164"/>
        <end position="1178"/>
    </location>
</feature>
<feature type="short sequence motif" description="LFa 13" evidence="3">
    <location>
        <begin position="1194"/>
        <end position="1202"/>
    </location>
</feature>
<feature type="short sequence motif" description="LFa 14" evidence="3">
    <location>
        <begin position="1227"/>
        <end position="1233"/>
    </location>
</feature>
<feature type="short sequence motif" description="LFa 15" evidence="3">
    <location>
        <begin position="1255"/>
        <end position="1263"/>
    </location>
</feature>
<feature type="short sequence motif" description="LFa 16" evidence="3">
    <location>
        <begin position="1283"/>
        <end position="1292"/>
    </location>
</feature>
<feature type="short sequence motif" description="LFa 17" evidence="3">
    <location>
        <begin position="1323"/>
        <end position="1331"/>
    </location>
</feature>
<feature type="compositionally biased region" description="Low complexity" evidence="4">
    <location>
        <begin position="201"/>
        <end position="213"/>
    </location>
</feature>
<feature type="compositionally biased region" description="Acidic residues" evidence="4">
    <location>
        <begin position="219"/>
        <end position="232"/>
    </location>
</feature>
<feature type="compositionally biased region" description="Acidic residues" evidence="4">
    <location>
        <begin position="249"/>
        <end position="274"/>
    </location>
</feature>
<feature type="compositionally biased region" description="Basic and acidic residues" evidence="4">
    <location>
        <begin position="289"/>
        <end position="324"/>
    </location>
</feature>
<feature type="compositionally biased region" description="Acidic residues" evidence="4">
    <location>
        <begin position="442"/>
        <end position="454"/>
    </location>
</feature>
<feature type="compositionally biased region" description="Polar residues" evidence="4">
    <location>
        <begin position="513"/>
        <end position="530"/>
    </location>
</feature>
<feature type="compositionally biased region" description="Low complexity" evidence="4">
    <location>
        <begin position="541"/>
        <end position="561"/>
    </location>
</feature>
<feature type="compositionally biased region" description="Polar residues" evidence="4">
    <location>
        <begin position="584"/>
        <end position="594"/>
    </location>
</feature>
<feature type="compositionally biased region" description="Polar residues" evidence="4">
    <location>
        <begin position="601"/>
        <end position="611"/>
    </location>
</feature>
<feature type="compositionally biased region" description="Basic and acidic residues" evidence="4">
    <location>
        <begin position="625"/>
        <end position="639"/>
    </location>
</feature>
<feature type="compositionally biased region" description="Acidic residues" evidence="4">
    <location>
        <begin position="800"/>
        <end position="811"/>
    </location>
</feature>
<feature type="compositionally biased region" description="Basic and acidic residues" evidence="4">
    <location>
        <begin position="818"/>
        <end position="830"/>
    </location>
</feature>
<feature type="compositionally biased region" description="Basic and acidic residues" evidence="4">
    <location>
        <begin position="894"/>
        <end position="906"/>
    </location>
</feature>
<feature type="compositionally biased region" description="Polar residues" evidence="4">
    <location>
        <begin position="908"/>
        <end position="919"/>
    </location>
</feature>
<feature type="compositionally biased region" description="Basic residues" evidence="4">
    <location>
        <begin position="1023"/>
        <end position="1041"/>
    </location>
</feature>
<feature type="compositionally biased region" description="Basic and acidic residues" evidence="4">
    <location>
        <begin position="1203"/>
        <end position="1225"/>
    </location>
</feature>
<feature type="compositionally biased region" description="Low complexity" evidence="4">
    <location>
        <begin position="1297"/>
        <end position="1311"/>
    </location>
</feature>
<feature type="modified residue" description="Phosphoserine" evidence="11 12">
    <location>
        <position position="157"/>
    </location>
</feature>
<feature type="modified residue" description="Phosphoserine" evidence="11">
    <location>
        <position position="159"/>
    </location>
</feature>
<feature type="modified residue" description="Phosphoserine" evidence="2">
    <location>
        <position position="204"/>
    </location>
</feature>
<feature type="modified residue" description="Phosphoserine" evidence="2">
    <location>
        <position position="205"/>
    </location>
</feature>
<feature type="modified residue" description="Phosphoserine" evidence="2">
    <location>
        <position position="209"/>
    </location>
</feature>
<feature type="modified residue" description="Phosphoserine" evidence="11">
    <location>
        <position position="284"/>
    </location>
</feature>
<feature type="modified residue" description="Phosphothreonine" evidence="12">
    <location>
        <position position="322"/>
    </location>
</feature>
<feature type="modified residue" description="Phosphoserine" evidence="11">
    <location>
        <position position="388"/>
    </location>
</feature>
<feature type="modified residue" description="Phosphoserine" evidence="11 12">
    <location>
        <position position="533"/>
    </location>
</feature>
<feature type="modified residue" description="Phosphoserine" evidence="2">
    <location>
        <position position="538"/>
    </location>
</feature>
<feature type="modified residue" description="Phosphoserine" evidence="11 12">
    <location>
        <position position="613"/>
    </location>
</feature>
<feature type="modified residue" description="Phosphoserine" evidence="10 11 12">
    <location>
        <position position="614"/>
    </location>
</feature>
<feature type="modified residue" description="Phosphoserine" evidence="11 12">
    <location>
        <position position="723"/>
    </location>
</feature>
<feature type="modified residue" description="Phosphoserine" evidence="9 10 11 12">
    <location>
        <position position="747"/>
    </location>
</feature>
<feature type="modified residue" description="Phosphoserine" evidence="12">
    <location>
        <position position="752"/>
    </location>
</feature>
<feature type="modified residue" description="Phosphoserine" evidence="2">
    <location>
        <position position="783"/>
    </location>
</feature>
<feature type="modified residue" description="Phosphoserine" evidence="12">
    <location>
        <position position="798"/>
    </location>
</feature>
<feature type="modified residue" description="Phosphoserine" evidence="12">
    <location>
        <position position="870"/>
    </location>
</feature>
<feature type="modified residue" description="Phosphoserine" evidence="12">
    <location>
        <position position="873"/>
    </location>
</feature>
<feature type="modified residue" description="Phosphoserine" evidence="1">
    <location>
        <position position="1049"/>
    </location>
</feature>
<feature type="modified residue" description="Phosphoserine" evidence="2">
    <location>
        <position position="1067"/>
    </location>
</feature>
<feature type="modified residue" description="Phosphoserine" evidence="1">
    <location>
        <position position="1084"/>
    </location>
</feature>
<feature type="modified residue" description="Phosphoserine" evidence="1">
    <location>
        <position position="1109"/>
    </location>
</feature>
<feature type="modified residue" description="Phosphoserine" evidence="11 12">
    <location>
        <position position="1169"/>
    </location>
</feature>
<feature type="modified residue" description="Phosphoserine" evidence="11 12">
    <location>
        <position position="1172"/>
    </location>
</feature>
<feature type="modified residue" description="Phosphoserine" evidence="11">
    <location>
        <position position="1173"/>
    </location>
</feature>
<feature type="modified residue" description="Phosphoserine" evidence="11">
    <location>
        <position position="1333"/>
    </location>
</feature>
<feature type="splice variant" id="VSP_030949" description="In isoform 2." evidence="6">
    <original>SSVPSGGSLFGDDEDDDLFSSAKTQPVVPEKKGTLKKDHPVSLKNQDPLDSTQGSKEKSTWKTEPAQDSSGLTPFKSREPSSRIGKI</original>
    <variation>V</variation>
    <location>
        <begin position="866"/>
        <end position="952"/>
    </location>
</feature>
<feature type="sequence conflict" description="In Ref. 3; AAH49979." evidence="7" ref="3">
    <original>L</original>
    <variation>S</variation>
    <location>
        <position position="385"/>
    </location>
</feature>
<feature type="sequence conflict" description="In Ref. 3; AAH49979." evidence="7" ref="3">
    <original>P</original>
    <variation>S</variation>
    <location>
        <position position="556"/>
    </location>
</feature>
<feature type="sequence conflict" description="In Ref. 1; BAC65602." evidence="7" ref="1">
    <original>A</original>
    <variation>V</variation>
    <location>
        <position position="630"/>
    </location>
</feature>
<feature type="sequence conflict" description="In Ref. 2; BAC29966." evidence="7" ref="2">
    <original>N</original>
    <variation>S</variation>
    <location>
        <position position="910"/>
    </location>
</feature>
<name>WASC2_MOUSE</name>
<accession>Q6PGL7</accession>
<accession>Q3TQ99</accession>
<accession>Q80TW8</accession>
<accession>Q80UQ4</accession>
<accession>Q8CAP0</accession>
<gene>
    <name evidence="8" type="primary">Washc2</name>
    <name type="synonym">D6Wsu116e</name>
    <name type="synonym">Fam21</name>
    <name type="synonym">Kiaa0592</name>
</gene>
<protein>
    <recommendedName>
        <fullName evidence="8">WASH complex subunit 2</fullName>
    </recommendedName>
</protein>
<organism>
    <name type="scientific">Mus musculus</name>
    <name type="common">Mouse</name>
    <dbReference type="NCBI Taxonomy" id="10090"/>
    <lineage>
        <taxon>Eukaryota</taxon>
        <taxon>Metazoa</taxon>
        <taxon>Chordata</taxon>
        <taxon>Craniata</taxon>
        <taxon>Vertebrata</taxon>
        <taxon>Euteleostomi</taxon>
        <taxon>Mammalia</taxon>
        <taxon>Eutheria</taxon>
        <taxon>Euarchontoglires</taxon>
        <taxon>Glires</taxon>
        <taxon>Rodentia</taxon>
        <taxon>Myomorpha</taxon>
        <taxon>Muroidea</taxon>
        <taxon>Muridae</taxon>
        <taxon>Murinae</taxon>
        <taxon>Mus</taxon>
        <taxon>Mus</taxon>
    </lineage>
</organism>
<evidence type="ECO:0000250" key="1">
    <source>
        <dbReference type="UniProtKB" id="Q641Q2"/>
    </source>
</evidence>
<evidence type="ECO:0000250" key="2">
    <source>
        <dbReference type="UniProtKB" id="Q80X08"/>
    </source>
</evidence>
<evidence type="ECO:0000250" key="3">
    <source>
        <dbReference type="UniProtKB" id="Q9Y4E1"/>
    </source>
</evidence>
<evidence type="ECO:0000256" key="4">
    <source>
        <dbReference type="SAM" id="MobiDB-lite"/>
    </source>
</evidence>
<evidence type="ECO:0000269" key="5">
    <source>
    </source>
</evidence>
<evidence type="ECO:0000303" key="6">
    <source>
    </source>
</evidence>
<evidence type="ECO:0000305" key="7"/>
<evidence type="ECO:0000312" key="8">
    <source>
        <dbReference type="MGI" id="MGI:106463"/>
    </source>
</evidence>
<evidence type="ECO:0007744" key="9">
    <source>
    </source>
</evidence>
<evidence type="ECO:0007744" key="10">
    <source>
    </source>
</evidence>
<evidence type="ECO:0007744" key="11">
    <source>
    </source>
</evidence>
<evidence type="ECO:0007744" key="12">
    <source>
    </source>
</evidence>
<sequence length="1334" mass="145311">MNRTSPDSERPPASEPVWERPWSVEEIRRSSQNWSLAADAGLLQFLQEFSQQTISRTHEIKKQVDGLIQETKATHCRLHNVFNDFLMLSNTQFIENRVYDEEVEEQVLKAEAEKAEQEKTREQKEIDLIPKVQEAVNYGLQVLDSAFEQLDIKAGNSDSEEDDANERVDLILEPKDLYIDRPLPYLIGSKLFMEQEDVGLGELSSEEGSVGSDRGSIVDSEDEKEEEESDEDFASHSDNDQNQHTTQISDEEEDDDGDLFADSEKEGDDIEDIEESAKSKRPTSFADELAARIKGDISNQRKEGQTDGKPQKTVKEKKERRTPADDEEDILFPPPTLTDEDFSPFGSRGGLFSNGQGLFDDEDESDLFKEAPRARPAQAPVSEELPPSPKPGKKIPAGAVSVLLGHPDVSGSTSAPSLKELQKHGQPTPGKSSHLPTPAGLFDDDDNDNDEDDNNFFMPSSSKPSKTDKVKSTAIIFDDDEGDLFKEKAEALPAASVSQTHESKTRADKTIALPSSKNLKLVSETKTQKGLFSDEEDSEDLFSSQSSSKPKSASLPSSQPPTSVSLFGDEDEEDSLFGSAAAKKQTSSLQPQSQEKAKPSEQPSKKTSALLFSSDEEDQWNIADSHTKLASDNKSKGELWDSGATQGQEAKAVKKTNLFEDDDDDEVDLFAIAKDSQKKTQRTSLLFEDDAESGSSLFGLPPTSVPSATTKKESVPKVPLLFSDEEDSEVPSGVKPEDLKVDNARVSPEVGSADVASIAQKEGLLPASDQEAGGPSDIFSSSSPLDKGAKGRTRTVLSLFDEDEDKVEDESSTCAPQDGREKGLKTDSRPKSTGVFQDEELLFSHKLQKDNDPDVDLFAGTKKIRSSVPSGGSLFGDDEDDDLFSSAKTQPVVPEKKGTLKKDHPVSLKNQDPLDSTQGSKEKSTWKTEPAQDSSGLTPFKSREPSSRIGKIQANLAINPAALLPTVALQIPGTKPVSSELAFPSSEPGRSHILESVPTLPGSVEAGVSFDLPAQADTLHSANKSRVKVRGKRRPQTRAARRLAAQESSEAEDVTVDRGPVAQLSSSPVLPNGHQPLLQPRMASGQTSSETATAPPWEGGPVLSAADRSFFVKSRPQTGNEADLFDSGDIFPKSRGSQSVEGAGVMAGEPPSHSSGGRKEKSLAFPDLSEGSSTEDLFQSVKPRAAKNRNPFPLLEDEEDLFADPRGKKNERKPDSHQDSVSKTHDIFEDDIFATEAIKPFPKKREKGRTLEPNLFDDNIDIFADLTVKPKEKSKKKVAAKSMFDDDTDDIFSSGLQAKASKPKSQSAEAASEQRSEHKVASIFDDPLNAFGSQ</sequence>
<comment type="function">
    <text evidence="3">Acts as a component of the WASH core complex that functions as a nucleation-promoting factor (NPF) at the surface of endosomes, where it recruits and activates the Arp2/3 complex to induce actin polymerization, playing a key role in the fission of tubules that serve as transport intermediates during endosome sorting. Mediates the recruitment of the WASH core complex to endosome membranes via binding to phospholipids and VPS35 of the retromer CSC. Mediates the recruitment of the F-actin-capping protein dimer to the WASH core complex probably promoting localized F-actin polymerization needed for vesicle scission. Via its C-terminus binds various phospholipids, most strongly phosphatidylinositol 4-phosphate (PtdIns-(4)P), phosphatidylinositol 5-phosphate (PtdIns-(5)P) and phosphatidylinositol 3,5-bisphosphate (PtdIns-(3,5)P2). Involved in the endosome-to-plasma membrane trafficking and recycling of SNX27-retromer-dependent cargo proteins, such as GLUT1. Required for the association of DNAJC13, ENTR1, ANKRD50 with retromer CSC subunit VPS35. Required for the endosomal recruitment of CCC and retriever complexes subunits COMMD1 and CCDC93 as well as the retrievere complex subunit VPS35L.</text>
</comment>
<comment type="subunit">
    <text evidence="3 5">Component of the WASH core complex also described as WASH regulatory complex (SHRC) composed of WASHC1, WASHC2, WASHC3, WASHC4 and WASHC5; in the complex interacts (via N-terminus) directly with WASHC1. The WASH core complex associates with the F-actin-capping protein dimer (formed by CAPZA1, CAPZA2 or CAPZA3 and CAPZB) in a transient or substoichiometric manner which was initially described as WASH complex. Interacts with VPS35; mediates the association with the retromer CSC complex. Interacts with FKBP15. Interacts with CCDC93, CCDC22, VPS35L; indicative for an association of the WASH core complex with the CCC and retriever complexes (By similarity). Directly interacts with TBC1D23 (PubMed:29084197).</text>
</comment>
<comment type="subcellular location">
    <subcellularLocation>
        <location evidence="3">Early endosome membrane</location>
    </subcellularLocation>
    <subcellularLocation>
        <location evidence="3">Cell membrane</location>
    </subcellularLocation>
</comment>
<comment type="alternative products">
    <event type="alternative splicing"/>
    <isoform>
        <id>Q6PGL7-1</id>
        <name>1</name>
        <sequence type="displayed"/>
    </isoform>
    <isoform>
        <id>Q6PGL7-2</id>
        <name>2</name>
        <sequence type="described" ref="VSP_030949"/>
    </isoform>
</comment>
<comment type="domain">
    <text evidence="3">The LFa (leucine-phenylalanine-acidic) motif bind directly to VPS35 of retromer CSC; adjacent motifs can act cooperatively to bind multiple CSCs, although there is significant variability in the affinities of different motifs for retromer.</text>
</comment>
<comment type="similarity">
    <text evidence="7">Belongs to the FAM21 family.</text>
</comment>
<comment type="sequence caution" evidence="7">
    <conflict type="miscellaneous discrepancy">
        <sequence resource="EMBL-CDS" id="AAH49979"/>
    </conflict>
    <text>Contaminating sequence. Potential poly-A sequence.</text>
</comment>
<dbReference type="EMBL" id="AK122320">
    <property type="protein sequence ID" value="BAC65602.2"/>
    <property type="molecule type" value="Transcribed_RNA"/>
</dbReference>
<dbReference type="EMBL" id="AK163765">
    <property type="protein sequence ID" value="BAE37485.1"/>
    <property type="molecule type" value="mRNA"/>
</dbReference>
<dbReference type="EMBL" id="AK038318">
    <property type="protein sequence ID" value="BAC29966.1"/>
    <property type="molecule type" value="mRNA"/>
</dbReference>
<dbReference type="EMBL" id="BC049979">
    <property type="protein sequence ID" value="AAH49979.1"/>
    <property type="status" value="ALT_SEQ"/>
    <property type="molecule type" value="mRNA"/>
</dbReference>
<dbReference type="EMBL" id="BC056942">
    <property type="protein sequence ID" value="AAH56942.1"/>
    <property type="molecule type" value="mRNA"/>
</dbReference>
<dbReference type="CCDS" id="CCDS20450.1">
    <molecule id="Q6PGL7-1"/>
</dbReference>
<dbReference type="RefSeq" id="NP_080861.2">
    <molecule id="Q6PGL7-1"/>
    <property type="nucleotide sequence ID" value="NM_026585.3"/>
</dbReference>
<dbReference type="SMR" id="Q6PGL7"/>
<dbReference type="BioGRID" id="205711">
    <property type="interactions" value="13"/>
</dbReference>
<dbReference type="ComplexPortal" id="CPX-1177">
    <property type="entry name" value="WASH complex, variant WASHC1/WASHC2"/>
</dbReference>
<dbReference type="FunCoup" id="Q6PGL7">
    <property type="interactions" value="2706"/>
</dbReference>
<dbReference type="IntAct" id="Q6PGL7">
    <property type="interactions" value="4"/>
</dbReference>
<dbReference type="MINT" id="Q6PGL7"/>
<dbReference type="STRING" id="10090.ENSMUSP00000038983"/>
<dbReference type="ChEMBL" id="CHEMBL4879481"/>
<dbReference type="GlyGen" id="Q6PGL7">
    <property type="glycosylation" value="1 site"/>
</dbReference>
<dbReference type="iPTMnet" id="Q6PGL7"/>
<dbReference type="PhosphoSitePlus" id="Q6PGL7"/>
<dbReference type="jPOST" id="Q6PGL7"/>
<dbReference type="PaxDb" id="10090-ENSMUSP00000038983"/>
<dbReference type="PeptideAtlas" id="Q6PGL7"/>
<dbReference type="ProteomicsDB" id="297839">
    <molecule id="Q6PGL7-1"/>
</dbReference>
<dbReference type="ProteomicsDB" id="297840">
    <molecule id="Q6PGL7-2"/>
</dbReference>
<dbReference type="Pumba" id="Q6PGL7"/>
<dbReference type="Ensembl" id="ENSMUST00000036759.11">
    <molecule id="Q6PGL7-1"/>
    <property type="protein sequence ID" value="ENSMUSP00000038983.9"/>
    <property type="gene ID" value="ENSMUSG00000024104.12"/>
</dbReference>
<dbReference type="GeneID" id="28006"/>
<dbReference type="KEGG" id="mmu:28006"/>
<dbReference type="UCSC" id="uc009djs.2">
    <molecule id="Q6PGL7-1"/>
    <property type="organism name" value="mouse"/>
</dbReference>
<dbReference type="AGR" id="MGI:106463"/>
<dbReference type="CTD" id="28006"/>
<dbReference type="MGI" id="MGI:106463">
    <property type="gene designation" value="Washc2"/>
</dbReference>
<dbReference type="VEuPathDB" id="HostDB:ENSMUSG00000024104"/>
<dbReference type="eggNOG" id="ENOG502QTIY">
    <property type="taxonomic scope" value="Eukaryota"/>
</dbReference>
<dbReference type="GeneTree" id="ENSGT00940000153997"/>
<dbReference type="HOGENOM" id="CLU_267715_0_0_1"/>
<dbReference type="InParanoid" id="Q6PGL7"/>
<dbReference type="OMA" id="IHTIFYD"/>
<dbReference type="OrthoDB" id="751084at2759"/>
<dbReference type="PhylomeDB" id="Q6PGL7"/>
<dbReference type="TreeFam" id="TF329309"/>
<dbReference type="BioGRID-ORCS" id="28006">
    <property type="hits" value="7 hits in 77 CRISPR screens"/>
</dbReference>
<dbReference type="ChiTaRS" id="Fam21">
    <property type="organism name" value="mouse"/>
</dbReference>
<dbReference type="PRO" id="PR:Q6PGL7"/>
<dbReference type="Proteomes" id="UP000000589">
    <property type="component" value="Chromosome 6"/>
</dbReference>
<dbReference type="RNAct" id="Q6PGL7">
    <property type="molecule type" value="protein"/>
</dbReference>
<dbReference type="Bgee" id="ENSMUSG00000024104">
    <property type="expression patterns" value="Expressed in cerebellar vermis and 265 other cell types or tissues"/>
</dbReference>
<dbReference type="ExpressionAtlas" id="Q6PGL7">
    <property type="expression patterns" value="baseline and differential"/>
</dbReference>
<dbReference type="GO" id="GO:0005829">
    <property type="term" value="C:cytosol"/>
    <property type="evidence" value="ECO:0007669"/>
    <property type="project" value="GOC"/>
</dbReference>
<dbReference type="GO" id="GO:0005769">
    <property type="term" value="C:early endosome"/>
    <property type="evidence" value="ECO:0000250"/>
    <property type="project" value="UniProtKB"/>
</dbReference>
<dbReference type="GO" id="GO:0031901">
    <property type="term" value="C:early endosome membrane"/>
    <property type="evidence" value="ECO:0000303"/>
    <property type="project" value="ComplexPortal"/>
</dbReference>
<dbReference type="GO" id="GO:0005768">
    <property type="term" value="C:endosome"/>
    <property type="evidence" value="ECO:0000266"/>
    <property type="project" value="MGI"/>
</dbReference>
<dbReference type="GO" id="GO:0005886">
    <property type="term" value="C:plasma membrane"/>
    <property type="evidence" value="ECO:0007669"/>
    <property type="project" value="UniProtKB-SubCell"/>
</dbReference>
<dbReference type="GO" id="GO:0071203">
    <property type="term" value="C:WASH complex"/>
    <property type="evidence" value="ECO:0000314"/>
    <property type="project" value="MGI"/>
</dbReference>
<dbReference type="GO" id="GO:0016197">
    <property type="term" value="P:endosomal transport"/>
    <property type="evidence" value="ECO:0000303"/>
    <property type="project" value="ComplexPortal"/>
</dbReference>
<dbReference type="GO" id="GO:0036010">
    <property type="term" value="P:protein localization to endosome"/>
    <property type="evidence" value="ECO:0000250"/>
    <property type="project" value="UniProtKB"/>
</dbReference>
<dbReference type="GO" id="GO:0015031">
    <property type="term" value="P:protein transport"/>
    <property type="evidence" value="ECO:0007669"/>
    <property type="project" value="UniProtKB-KW"/>
</dbReference>
<dbReference type="GO" id="GO:0034315">
    <property type="term" value="P:regulation of Arp2/3 complex-mediated actin nucleation"/>
    <property type="evidence" value="ECO:0000303"/>
    <property type="project" value="ComplexPortal"/>
</dbReference>
<dbReference type="GO" id="GO:0042147">
    <property type="term" value="P:retrograde transport, endosome to Golgi"/>
    <property type="evidence" value="ECO:0000250"/>
    <property type="project" value="UniProtKB"/>
</dbReference>
<dbReference type="InterPro" id="IPR029341">
    <property type="entry name" value="FAM21/CAPZIP"/>
</dbReference>
<dbReference type="PANTHER" id="PTHR21669">
    <property type="entry name" value="CAPZ-INTERACTING PROTEIN AND RELATED PROTEINS"/>
    <property type="match status" value="1"/>
</dbReference>
<dbReference type="PANTHER" id="PTHR21669:SF38">
    <property type="entry name" value="WASH COMPLEX SUBUNIT 2A-RELATED"/>
    <property type="match status" value="1"/>
</dbReference>
<dbReference type="Pfam" id="PF15255">
    <property type="entry name" value="CAP-ZIP_m"/>
    <property type="match status" value="1"/>
</dbReference>